<protein>
    <recommendedName>
        <fullName>Uncharacterized protein YCR041W</fullName>
    </recommendedName>
</protein>
<organism>
    <name type="scientific">Saccharomyces cerevisiae (strain ATCC 204508 / S288c)</name>
    <name type="common">Baker's yeast</name>
    <dbReference type="NCBI Taxonomy" id="559292"/>
    <lineage>
        <taxon>Eukaryota</taxon>
        <taxon>Fungi</taxon>
        <taxon>Dikarya</taxon>
        <taxon>Ascomycota</taxon>
        <taxon>Saccharomycotina</taxon>
        <taxon>Saccharomycetes</taxon>
        <taxon>Saccharomycetales</taxon>
        <taxon>Saccharomycetaceae</taxon>
        <taxon>Saccharomyces</taxon>
    </lineage>
</organism>
<gene>
    <name evidence="3" type="ordered locus">YCR041W</name>
    <name type="ORF">YCR41W</name>
</gene>
<dbReference type="EMBL" id="X59720">
    <property type="protein sequence ID" value="CAA42289.1"/>
    <property type="molecule type" value="Genomic_DNA"/>
</dbReference>
<dbReference type="EMBL" id="AY693251">
    <property type="protein sequence ID" value="AAT93270.1"/>
    <property type="molecule type" value="Genomic_DNA"/>
</dbReference>
<dbReference type="EMBL" id="BK006937">
    <property type="protein sequence ID" value="DAA64811.1"/>
    <property type="molecule type" value="Genomic_DNA"/>
</dbReference>
<dbReference type="PIR" id="S19454">
    <property type="entry name" value="S19454"/>
</dbReference>
<dbReference type="RefSeq" id="NP_001297596.1">
    <property type="nucleotide sequence ID" value="NM_001310667.1"/>
</dbReference>
<dbReference type="DIP" id="DIP-4992N"/>
<dbReference type="FunCoup" id="P37265">
    <property type="interactions" value="41"/>
</dbReference>
<dbReference type="IntAct" id="P37265">
    <property type="interactions" value="5"/>
</dbReference>
<dbReference type="STRING" id="4932.YCR041W"/>
<dbReference type="PaxDb" id="4932-YCR041W"/>
<dbReference type="EnsemblFungi" id="YCR041W_mRNA">
    <property type="protein sequence ID" value="YCR041W"/>
    <property type="gene ID" value="YCR041W"/>
</dbReference>
<dbReference type="GeneID" id="850408"/>
<dbReference type="KEGG" id="sce:YCR041W"/>
<dbReference type="AGR" id="SGD:S000000637"/>
<dbReference type="SGD" id="S000000637">
    <property type="gene designation" value="YCR041W"/>
</dbReference>
<dbReference type="VEuPathDB" id="FungiDB:YCR041W"/>
<dbReference type="GeneTree" id="ENSGT00940000179575"/>
<dbReference type="HOGENOM" id="CLU_164955_0_0_1"/>
<dbReference type="InParanoid" id="P37265"/>
<dbReference type="PRO" id="PR:P37265"/>
<dbReference type="Proteomes" id="UP000002311">
    <property type="component" value="Chromosome III"/>
</dbReference>
<dbReference type="RNAct" id="P37265">
    <property type="molecule type" value="protein"/>
</dbReference>
<dbReference type="GO" id="GO:0016020">
    <property type="term" value="C:membrane"/>
    <property type="evidence" value="ECO:0007669"/>
    <property type="project" value="UniProtKB-SubCell"/>
</dbReference>
<dbReference type="GO" id="GO:0007059">
    <property type="term" value="P:chromosome segregation"/>
    <property type="evidence" value="ECO:0007669"/>
    <property type="project" value="UniProtKB-KW"/>
</dbReference>
<accession>P37265</accession>
<accession>A0A0I9RJ66</accession>
<feature type="chain" id="PRO_0000202567" description="Uncharacterized protein YCR041W">
    <location>
        <begin position="1"/>
        <end position="110"/>
    </location>
</feature>
<feature type="transmembrane region" description="Helical" evidence="1">
    <location>
        <begin position="32"/>
        <end position="52"/>
    </location>
</feature>
<feature type="transmembrane region" description="Helical" evidence="1">
    <location>
        <begin position="57"/>
        <end position="77"/>
    </location>
</feature>
<feature type="transmembrane region" description="Helical" evidence="1">
    <location>
        <begin position="90"/>
        <end position="110"/>
    </location>
</feature>
<reference key="1">
    <citation type="journal article" date="1992" name="Nature">
        <title>The complete DNA sequence of yeast chromosome III.</title>
        <authorList>
            <person name="Oliver S.G."/>
            <person name="van der Aart Q.J.M."/>
            <person name="Agostoni-Carbone M.L."/>
            <person name="Aigle M."/>
            <person name="Alberghina L."/>
            <person name="Alexandraki D."/>
            <person name="Antoine G."/>
            <person name="Anwar R."/>
            <person name="Ballesta J.P.G."/>
            <person name="Benit P."/>
            <person name="Berben G."/>
            <person name="Bergantino E."/>
            <person name="Biteau N."/>
            <person name="Bolle P.-A."/>
            <person name="Bolotin-Fukuhara M."/>
            <person name="Brown A."/>
            <person name="Brown A.J.P."/>
            <person name="Buhler J.-M."/>
            <person name="Carcano C."/>
            <person name="Carignani G."/>
            <person name="Cederberg H."/>
            <person name="Chanet R."/>
            <person name="Contreras R."/>
            <person name="Crouzet M."/>
            <person name="Daignan-Fornier B."/>
            <person name="Defoor E."/>
            <person name="Delgado M.D."/>
            <person name="Demolder J."/>
            <person name="Doira C."/>
            <person name="Dubois E."/>
            <person name="Dujon B."/>
            <person name="Duesterhoeft A."/>
            <person name="Erdmann D."/>
            <person name="Esteban M."/>
            <person name="Fabre F."/>
            <person name="Fairhead C."/>
            <person name="Faye G."/>
            <person name="Feldmann H."/>
            <person name="Fiers W."/>
            <person name="Francingues-Gaillard M.-C."/>
            <person name="Franco L."/>
            <person name="Frontali L."/>
            <person name="Fukuhara H."/>
            <person name="Fuller L.J."/>
            <person name="Galland P."/>
            <person name="Gent M.E."/>
            <person name="Gigot D."/>
            <person name="Gilliquet V."/>
            <person name="Glansdorff N."/>
            <person name="Goffeau A."/>
            <person name="Grenson M."/>
            <person name="Grisanti P."/>
            <person name="Grivell L.A."/>
            <person name="de Haan M."/>
            <person name="Haasemann M."/>
            <person name="Hatat D."/>
            <person name="Hoenicka J."/>
            <person name="Hegemann J.H."/>
            <person name="Herbert C.J."/>
            <person name="Hilger F."/>
            <person name="Hohmann S."/>
            <person name="Hollenberg C.P."/>
            <person name="Huse K."/>
            <person name="Iborra F."/>
            <person name="Indge K.J."/>
            <person name="Isono K."/>
            <person name="Jacq C."/>
            <person name="Jacquet M."/>
            <person name="James C.M."/>
            <person name="Jauniaux J.-C."/>
            <person name="Jia Y."/>
            <person name="Jimenez A."/>
            <person name="Kelly A."/>
            <person name="Kleinhans U."/>
            <person name="Kreisl P."/>
            <person name="Lanfranchi G."/>
            <person name="Lewis C."/>
            <person name="van der Linden C.G."/>
            <person name="Lucchini G."/>
            <person name="Lutzenkirchen K."/>
            <person name="Maat M.J."/>
            <person name="Mallet L."/>
            <person name="Mannhaupt G."/>
            <person name="Martegani E."/>
            <person name="Mathieu A."/>
            <person name="Maurer C.T.C."/>
            <person name="McConnell D."/>
            <person name="McKee R.A."/>
            <person name="Messenguy F."/>
            <person name="Mewes H.-W."/>
            <person name="Molemans F."/>
            <person name="Montague M.A."/>
            <person name="Muzi Falconi M."/>
            <person name="Navas L."/>
            <person name="Newlon C.S."/>
            <person name="Noone D."/>
            <person name="Pallier C."/>
            <person name="Panzeri L."/>
            <person name="Pearson B.M."/>
            <person name="Perea J."/>
            <person name="Philippsen P."/>
            <person name="Pierard A."/>
            <person name="Planta R.J."/>
            <person name="Plevani P."/>
            <person name="Poetsch B."/>
            <person name="Pohl F.M."/>
            <person name="Purnelle B."/>
            <person name="Ramezani Rad M."/>
            <person name="Rasmussen S.W."/>
            <person name="Raynal A."/>
            <person name="Remacha M.A."/>
            <person name="Richterich P."/>
            <person name="Roberts A.B."/>
            <person name="Rodriguez F."/>
            <person name="Sanz E."/>
            <person name="Schaaff-Gerstenschlaeger I."/>
            <person name="Scherens B."/>
            <person name="Schweitzer B."/>
            <person name="Shu Y."/>
            <person name="Skala J."/>
            <person name="Slonimski P.P."/>
            <person name="Sor F."/>
            <person name="Soustelle C."/>
            <person name="Spiegelberg R."/>
            <person name="Stateva L.I."/>
            <person name="Steensma H.Y."/>
            <person name="Steiner S."/>
            <person name="Thierry A."/>
            <person name="Thireos G."/>
            <person name="Tzermia M."/>
            <person name="Urrestarazu L.A."/>
            <person name="Valle G."/>
            <person name="Vetter I."/>
            <person name="van Vliet-Reedijk J.C."/>
            <person name="Voet M."/>
            <person name="Volckaert G."/>
            <person name="Vreken P."/>
            <person name="Wang H."/>
            <person name="Warmington J.R."/>
            <person name="von Wettstein D."/>
            <person name="Wicksteed B.L."/>
            <person name="Wilson C."/>
            <person name="Wurst H."/>
            <person name="Xu G."/>
            <person name="Yoshikawa A."/>
            <person name="Zimmermann F.K."/>
            <person name="Sgouros J.G."/>
        </authorList>
    </citation>
    <scope>NUCLEOTIDE SEQUENCE [LARGE SCALE GENOMIC DNA]</scope>
    <source>
        <strain>ATCC 204508 / S288c</strain>
    </source>
</reference>
<reference key="2">
    <citation type="journal article" date="2014" name="G3 (Bethesda)">
        <title>The reference genome sequence of Saccharomyces cerevisiae: Then and now.</title>
        <authorList>
            <person name="Engel S.R."/>
            <person name="Dietrich F.S."/>
            <person name="Fisk D.G."/>
            <person name="Binkley G."/>
            <person name="Balakrishnan R."/>
            <person name="Costanzo M.C."/>
            <person name="Dwight S.S."/>
            <person name="Hitz B.C."/>
            <person name="Karra K."/>
            <person name="Nash R.S."/>
            <person name="Weng S."/>
            <person name="Wong E.D."/>
            <person name="Lloyd P."/>
            <person name="Skrzypek M.S."/>
            <person name="Miyasato S.R."/>
            <person name="Simison M."/>
            <person name="Cherry J.M."/>
        </authorList>
    </citation>
    <scope>GENOME REANNOTATION</scope>
    <source>
        <strain>ATCC 204508 / S288c</strain>
    </source>
</reference>
<reference key="3">
    <citation type="journal article" date="2007" name="Genome Res.">
        <title>Approaching a complete repository of sequence-verified protein-encoding clones for Saccharomyces cerevisiae.</title>
        <authorList>
            <person name="Hu Y."/>
            <person name="Rolfs A."/>
            <person name="Bhullar B."/>
            <person name="Murthy T.V.S."/>
            <person name="Zhu C."/>
            <person name="Berger M.F."/>
            <person name="Camargo A.A."/>
            <person name="Kelley F."/>
            <person name="McCarron S."/>
            <person name="Jepson D."/>
            <person name="Richardson A."/>
            <person name="Raphael J."/>
            <person name="Moreira D."/>
            <person name="Taycher E."/>
            <person name="Zuo D."/>
            <person name="Mohr S."/>
            <person name="Kane M.F."/>
            <person name="Williamson J."/>
            <person name="Simpson A.J.G."/>
            <person name="Bulyk M.L."/>
            <person name="Harlow E."/>
            <person name="Marsischky G."/>
            <person name="Kolodner R.D."/>
            <person name="LaBaer J."/>
        </authorList>
    </citation>
    <scope>NUCLEOTIDE SEQUENCE [GENOMIC DNA]</scope>
    <source>
        <strain>ATCC 204508 / S288c</strain>
    </source>
</reference>
<reference key="4">
    <citation type="journal article" date="2015" name="J. Biosci. Bioeng.">
        <title>Stabilization of mini-chromosome segregation during mitotic growth by overexpression of YCR041W and its application to chromosome engineering in Saccharomyces cerevisiae.</title>
        <authorList>
            <person name="Sasano Y."/>
            <person name="Yamagishi K."/>
            <person name="Tanikawa M."/>
            <person name="Nakazawa T."/>
            <person name="Sugiyama M."/>
            <person name="Kaneko Y."/>
            <person name="Harashima S."/>
        </authorList>
    </citation>
    <scope>FUNCTION</scope>
</reference>
<evidence type="ECO:0000255" key="1"/>
<evidence type="ECO:0000269" key="2">
    <source>
    </source>
</evidence>
<evidence type="ECO:0000312" key="3">
    <source>
        <dbReference type="SGD" id="S000000637"/>
    </source>
</evidence>
<comment type="function">
    <text evidence="2">May play a role in proper chromosome segregation. Suppresses the high-frequency loss of mini-chromosomes when overexpressed, and this suppression is completely dependent on silencing protein SIR4.</text>
</comment>
<comment type="subcellular location">
    <subcellularLocation>
        <location evidence="1">Membrane</location>
        <topology evidence="1">Multi-pass membrane protein</topology>
    </subcellularLocation>
</comment>
<proteinExistence type="inferred from homology"/>
<sequence length="110" mass="12887">MLKYVVTDIGKMCLYIWPYRVWSWRRLFIFRVLNVVSIAILFETPHRLALVPNVCLYTHMAIPLSTCLFCLCLCICIKYDITQTQANNQFLASFFVLILTINDLDVTFVI</sequence>
<name>YCR41_YEAST</name>
<keyword id="KW-0159">Chromosome partition</keyword>
<keyword id="KW-0472">Membrane</keyword>
<keyword id="KW-1185">Reference proteome</keyword>
<keyword id="KW-0812">Transmembrane</keyword>
<keyword id="KW-1133">Transmembrane helix</keyword>